<proteinExistence type="inferred from homology"/>
<accession>B2V090</accession>
<organism>
    <name type="scientific">Clostridium botulinum (strain Alaska E43 / Type E3)</name>
    <dbReference type="NCBI Taxonomy" id="508767"/>
    <lineage>
        <taxon>Bacteria</taxon>
        <taxon>Bacillati</taxon>
        <taxon>Bacillota</taxon>
        <taxon>Clostridia</taxon>
        <taxon>Eubacteriales</taxon>
        <taxon>Clostridiaceae</taxon>
        <taxon>Clostridium</taxon>
    </lineage>
</organism>
<dbReference type="EMBL" id="CP001078">
    <property type="protein sequence ID" value="ACD52854.1"/>
    <property type="molecule type" value="Genomic_DNA"/>
</dbReference>
<dbReference type="RefSeq" id="WP_012450901.1">
    <property type="nucleotide sequence ID" value="NC_010723.1"/>
</dbReference>
<dbReference type="SMR" id="B2V090"/>
<dbReference type="KEGG" id="cbt:CLH_0547"/>
<dbReference type="HOGENOM" id="CLU_073529_0_2_9"/>
<dbReference type="GO" id="GO:0046872">
    <property type="term" value="F:metal ion binding"/>
    <property type="evidence" value="ECO:0007669"/>
    <property type="project" value="UniProtKB-KW"/>
</dbReference>
<dbReference type="GO" id="GO:0008237">
    <property type="term" value="F:metallopeptidase activity"/>
    <property type="evidence" value="ECO:0007669"/>
    <property type="project" value="UniProtKB-KW"/>
</dbReference>
<dbReference type="GO" id="GO:0006508">
    <property type="term" value="P:proteolysis"/>
    <property type="evidence" value="ECO:0007669"/>
    <property type="project" value="UniProtKB-KW"/>
</dbReference>
<dbReference type="CDD" id="cd08071">
    <property type="entry name" value="MPN_DUF2466"/>
    <property type="match status" value="1"/>
</dbReference>
<dbReference type="Gene3D" id="1.10.150.20">
    <property type="entry name" value="5' to 3' exonuclease, C-terminal subdomain"/>
    <property type="match status" value="1"/>
</dbReference>
<dbReference type="Gene3D" id="3.40.140.10">
    <property type="entry name" value="Cytidine Deaminase, domain 2"/>
    <property type="match status" value="1"/>
</dbReference>
<dbReference type="InterPro" id="IPR037518">
    <property type="entry name" value="MPN"/>
</dbReference>
<dbReference type="InterPro" id="IPR025657">
    <property type="entry name" value="RadC_JAB"/>
</dbReference>
<dbReference type="InterPro" id="IPR010994">
    <property type="entry name" value="RuvA_2-like"/>
</dbReference>
<dbReference type="InterPro" id="IPR001405">
    <property type="entry name" value="UPF0758"/>
</dbReference>
<dbReference type="InterPro" id="IPR020891">
    <property type="entry name" value="UPF0758_CS"/>
</dbReference>
<dbReference type="InterPro" id="IPR046778">
    <property type="entry name" value="UPF0758_N"/>
</dbReference>
<dbReference type="NCBIfam" id="NF000642">
    <property type="entry name" value="PRK00024.1"/>
    <property type="match status" value="1"/>
</dbReference>
<dbReference type="NCBIfam" id="TIGR00608">
    <property type="entry name" value="radc"/>
    <property type="match status" value="1"/>
</dbReference>
<dbReference type="PANTHER" id="PTHR30471">
    <property type="entry name" value="DNA REPAIR PROTEIN RADC"/>
    <property type="match status" value="1"/>
</dbReference>
<dbReference type="PANTHER" id="PTHR30471:SF3">
    <property type="entry name" value="UPF0758 PROTEIN YEES-RELATED"/>
    <property type="match status" value="1"/>
</dbReference>
<dbReference type="Pfam" id="PF04002">
    <property type="entry name" value="RadC"/>
    <property type="match status" value="1"/>
</dbReference>
<dbReference type="Pfam" id="PF20582">
    <property type="entry name" value="UPF0758_N"/>
    <property type="match status" value="1"/>
</dbReference>
<dbReference type="SUPFAM" id="SSF102712">
    <property type="entry name" value="JAB1/MPN domain"/>
    <property type="match status" value="1"/>
</dbReference>
<dbReference type="SUPFAM" id="SSF47781">
    <property type="entry name" value="RuvA domain 2-like"/>
    <property type="match status" value="1"/>
</dbReference>
<dbReference type="PROSITE" id="PS50249">
    <property type="entry name" value="MPN"/>
    <property type="match status" value="1"/>
</dbReference>
<dbReference type="PROSITE" id="PS01302">
    <property type="entry name" value="UPF0758"/>
    <property type="match status" value="1"/>
</dbReference>
<evidence type="ECO:0000255" key="1">
    <source>
        <dbReference type="PROSITE-ProRule" id="PRU01182"/>
    </source>
</evidence>
<evidence type="ECO:0000305" key="2"/>
<gene>
    <name type="ordered locus">CLH_0547</name>
</gene>
<keyword id="KW-0378">Hydrolase</keyword>
<keyword id="KW-0479">Metal-binding</keyword>
<keyword id="KW-0482">Metalloprotease</keyword>
<keyword id="KW-0645">Protease</keyword>
<keyword id="KW-0862">Zinc</keyword>
<protein>
    <recommendedName>
        <fullName>UPF0758 protein CLH_0547</fullName>
    </recommendedName>
</protein>
<sequence length="229" mass="25510">MENSLKIKDIPKNERPKEKLLSYGADTLNNSELLAIILRTGTKGENVLQLSNRLLSEFQGLDGILEASLDDITSIKGIKEGKASQILALAELFRRFRTFKSADRDIKIMSPNDIAMLINGEMSLLKQEILKVIFLNTKNIVIGTKDVFKGSLNTSIVHPREIFKEAVNKSSTKIIICHNHPSGDPTPSKEDINITLRIKECGEIMGIQLLDHIIIGKNGFISLKEKGFI</sequence>
<comment type="similarity">
    <text evidence="2">Belongs to the UPF0758 family.</text>
</comment>
<feature type="chain" id="PRO_1000089804" description="UPF0758 protein CLH_0547">
    <location>
        <begin position="1"/>
        <end position="229"/>
    </location>
</feature>
<feature type="domain" description="MPN" evidence="1">
    <location>
        <begin position="107"/>
        <end position="229"/>
    </location>
</feature>
<feature type="short sequence motif" description="JAMM motif" evidence="1">
    <location>
        <begin position="178"/>
        <end position="191"/>
    </location>
</feature>
<feature type="binding site" evidence="1">
    <location>
        <position position="178"/>
    </location>
    <ligand>
        <name>Zn(2+)</name>
        <dbReference type="ChEBI" id="CHEBI:29105"/>
        <note>catalytic</note>
    </ligand>
</feature>
<feature type="binding site" evidence="1">
    <location>
        <position position="180"/>
    </location>
    <ligand>
        <name>Zn(2+)</name>
        <dbReference type="ChEBI" id="CHEBI:29105"/>
        <note>catalytic</note>
    </ligand>
</feature>
<feature type="binding site" evidence="1">
    <location>
        <position position="191"/>
    </location>
    <ligand>
        <name>Zn(2+)</name>
        <dbReference type="ChEBI" id="CHEBI:29105"/>
        <note>catalytic</note>
    </ligand>
</feature>
<name>Y547_CLOBA</name>
<reference key="1">
    <citation type="submission" date="2008-05" db="EMBL/GenBank/DDBJ databases">
        <title>Complete genome sequence of Clostridium botulinum E3 str. Alaska E43.</title>
        <authorList>
            <person name="Brinkac L.M."/>
            <person name="Brown J.L."/>
            <person name="Bruce D."/>
            <person name="Detter C."/>
            <person name="Munk C."/>
            <person name="Smith L.A."/>
            <person name="Smith T.J."/>
            <person name="Sutton G."/>
            <person name="Brettin T.S."/>
        </authorList>
    </citation>
    <scope>NUCLEOTIDE SEQUENCE [LARGE SCALE GENOMIC DNA]</scope>
    <source>
        <strain>Alaska E43 / Type E3</strain>
    </source>
</reference>